<comment type="function">
    <text evidence="1">This protein is located at the 30S-50S ribosomal subunit interface and may play a role in the structure and function of the aminoacyl-tRNA binding site.</text>
</comment>
<comment type="similarity">
    <text evidence="1">Belongs to the bacterial ribosomal protein bL19 family.</text>
</comment>
<feature type="chain" id="PRO_1000193817" description="Large ribosomal subunit protein bL19">
    <location>
        <begin position="1"/>
        <end position="115"/>
    </location>
</feature>
<organism>
    <name type="scientific">Coxiella burnetii (strain CbuK_Q154)</name>
    <name type="common">Coxiella burnetii (strain Q154)</name>
    <dbReference type="NCBI Taxonomy" id="434924"/>
    <lineage>
        <taxon>Bacteria</taxon>
        <taxon>Pseudomonadati</taxon>
        <taxon>Pseudomonadota</taxon>
        <taxon>Gammaproteobacteria</taxon>
        <taxon>Legionellales</taxon>
        <taxon>Coxiellaceae</taxon>
        <taxon>Coxiella</taxon>
    </lineage>
</organism>
<name>RL19_COXB1</name>
<gene>
    <name evidence="1" type="primary">rplS</name>
    <name type="ordered locus">CbuK_1416</name>
</gene>
<accession>B6J8J1</accession>
<reference key="1">
    <citation type="journal article" date="2009" name="Infect. Immun.">
        <title>Comparative genomics reveal extensive transposon-mediated genomic plasticity and diversity among potential effector proteins within the genus Coxiella.</title>
        <authorList>
            <person name="Beare P.A."/>
            <person name="Unsworth N."/>
            <person name="Andoh M."/>
            <person name="Voth D.E."/>
            <person name="Omsland A."/>
            <person name="Gilk S.D."/>
            <person name="Williams K.P."/>
            <person name="Sobral B.W."/>
            <person name="Kupko J.J. III"/>
            <person name="Porcella S.F."/>
            <person name="Samuel J.E."/>
            <person name="Heinzen R.A."/>
        </authorList>
    </citation>
    <scope>NUCLEOTIDE SEQUENCE [LARGE SCALE GENOMIC DNA]</scope>
    <source>
        <strain>CbuK_Q154</strain>
    </source>
</reference>
<protein>
    <recommendedName>
        <fullName evidence="1">Large ribosomal subunit protein bL19</fullName>
    </recommendedName>
    <alternativeName>
        <fullName evidence="2">50S ribosomal protein L19</fullName>
    </alternativeName>
</protein>
<evidence type="ECO:0000255" key="1">
    <source>
        <dbReference type="HAMAP-Rule" id="MF_00402"/>
    </source>
</evidence>
<evidence type="ECO:0000305" key="2"/>
<sequence>MNNIIQLLETEQTQGKEIPDFRAGDTVTVQVKVKEGNRERLQAFEGVVIARRHRGLNSSFTVRKVSHGEGVERVFQLYSPLIASIKVNRRGDVRRAKLYYLRNLRGRKAKIKEKI</sequence>
<keyword id="KW-0687">Ribonucleoprotein</keyword>
<keyword id="KW-0689">Ribosomal protein</keyword>
<dbReference type="EMBL" id="CP001020">
    <property type="protein sequence ID" value="ACJ20590.1"/>
    <property type="molecule type" value="Genomic_DNA"/>
</dbReference>
<dbReference type="RefSeq" id="WP_005771383.1">
    <property type="nucleotide sequence ID" value="NC_011528.1"/>
</dbReference>
<dbReference type="SMR" id="B6J8J1"/>
<dbReference type="KEGG" id="cbc:CbuK_1416"/>
<dbReference type="HOGENOM" id="CLU_103507_2_1_6"/>
<dbReference type="GO" id="GO:0022625">
    <property type="term" value="C:cytosolic large ribosomal subunit"/>
    <property type="evidence" value="ECO:0007669"/>
    <property type="project" value="TreeGrafter"/>
</dbReference>
<dbReference type="GO" id="GO:0003735">
    <property type="term" value="F:structural constituent of ribosome"/>
    <property type="evidence" value="ECO:0007669"/>
    <property type="project" value="InterPro"/>
</dbReference>
<dbReference type="GO" id="GO:0006412">
    <property type="term" value="P:translation"/>
    <property type="evidence" value="ECO:0007669"/>
    <property type="project" value="UniProtKB-UniRule"/>
</dbReference>
<dbReference type="FunFam" id="2.30.30.790:FF:000001">
    <property type="entry name" value="50S ribosomal protein L19"/>
    <property type="match status" value="1"/>
</dbReference>
<dbReference type="Gene3D" id="2.30.30.790">
    <property type="match status" value="1"/>
</dbReference>
<dbReference type="HAMAP" id="MF_00402">
    <property type="entry name" value="Ribosomal_bL19"/>
    <property type="match status" value="1"/>
</dbReference>
<dbReference type="InterPro" id="IPR001857">
    <property type="entry name" value="Ribosomal_bL19"/>
</dbReference>
<dbReference type="InterPro" id="IPR018257">
    <property type="entry name" value="Ribosomal_bL19_CS"/>
</dbReference>
<dbReference type="InterPro" id="IPR038657">
    <property type="entry name" value="Ribosomal_bL19_sf"/>
</dbReference>
<dbReference type="InterPro" id="IPR008991">
    <property type="entry name" value="Translation_prot_SH3-like_sf"/>
</dbReference>
<dbReference type="NCBIfam" id="TIGR01024">
    <property type="entry name" value="rplS_bact"/>
    <property type="match status" value="1"/>
</dbReference>
<dbReference type="PANTHER" id="PTHR15680:SF9">
    <property type="entry name" value="LARGE RIBOSOMAL SUBUNIT PROTEIN BL19M"/>
    <property type="match status" value="1"/>
</dbReference>
<dbReference type="PANTHER" id="PTHR15680">
    <property type="entry name" value="RIBOSOMAL PROTEIN L19"/>
    <property type="match status" value="1"/>
</dbReference>
<dbReference type="Pfam" id="PF01245">
    <property type="entry name" value="Ribosomal_L19"/>
    <property type="match status" value="1"/>
</dbReference>
<dbReference type="PIRSF" id="PIRSF002191">
    <property type="entry name" value="Ribosomal_L19"/>
    <property type="match status" value="1"/>
</dbReference>
<dbReference type="PRINTS" id="PR00061">
    <property type="entry name" value="RIBOSOMALL19"/>
</dbReference>
<dbReference type="SUPFAM" id="SSF50104">
    <property type="entry name" value="Translation proteins SH3-like domain"/>
    <property type="match status" value="1"/>
</dbReference>
<dbReference type="PROSITE" id="PS01015">
    <property type="entry name" value="RIBOSOMAL_L19"/>
    <property type="match status" value="1"/>
</dbReference>
<proteinExistence type="inferred from homology"/>